<accession>Q0I079</accession>
<feature type="chain" id="PRO_0000267943" description="Large ribosomal subunit protein bL17">
    <location>
        <begin position="1"/>
        <end position="131"/>
    </location>
</feature>
<name>RL17_SHESR</name>
<keyword id="KW-0687">Ribonucleoprotein</keyword>
<keyword id="KW-0689">Ribosomal protein</keyword>
<sequence>MRHRKSGRQLNRNSSHRQAMFRNMASSLVRHEIIKTTVAKAKELRRVVEPLITLAKSDSVANRRLAFARTRDAEVVGKLFTELGPRYQERPGGYTRILKCGLRAGDKAPMAYIELVGRPEAAQAVEVEAAE</sequence>
<protein>
    <recommendedName>
        <fullName evidence="1">Large ribosomal subunit protein bL17</fullName>
    </recommendedName>
    <alternativeName>
        <fullName evidence="2">50S ribosomal protein L17</fullName>
    </alternativeName>
</protein>
<gene>
    <name evidence="1" type="primary">rplQ</name>
    <name type="ordered locus">Shewmr7_0220</name>
</gene>
<proteinExistence type="inferred from homology"/>
<comment type="subunit">
    <text evidence="1">Part of the 50S ribosomal subunit. Contacts protein L32.</text>
</comment>
<comment type="similarity">
    <text evidence="1">Belongs to the bacterial ribosomal protein bL17 family.</text>
</comment>
<evidence type="ECO:0000255" key="1">
    <source>
        <dbReference type="HAMAP-Rule" id="MF_01368"/>
    </source>
</evidence>
<evidence type="ECO:0000305" key="2"/>
<reference key="1">
    <citation type="submission" date="2006-08" db="EMBL/GenBank/DDBJ databases">
        <title>Complete sequence of chromosome 1 of Shewanella sp. MR-7.</title>
        <authorList>
            <person name="Copeland A."/>
            <person name="Lucas S."/>
            <person name="Lapidus A."/>
            <person name="Barry K."/>
            <person name="Detter J.C."/>
            <person name="Glavina del Rio T."/>
            <person name="Hammon N."/>
            <person name="Israni S."/>
            <person name="Dalin E."/>
            <person name="Tice H."/>
            <person name="Pitluck S."/>
            <person name="Kiss H."/>
            <person name="Brettin T."/>
            <person name="Bruce D."/>
            <person name="Han C."/>
            <person name="Tapia R."/>
            <person name="Gilna P."/>
            <person name="Schmutz J."/>
            <person name="Larimer F."/>
            <person name="Land M."/>
            <person name="Hauser L."/>
            <person name="Kyrpides N."/>
            <person name="Mikhailova N."/>
            <person name="Nealson K."/>
            <person name="Konstantinidis K."/>
            <person name="Klappenbach J."/>
            <person name="Tiedje J."/>
            <person name="Richardson P."/>
        </authorList>
    </citation>
    <scope>NUCLEOTIDE SEQUENCE [LARGE SCALE GENOMIC DNA]</scope>
    <source>
        <strain>MR-7</strain>
    </source>
</reference>
<dbReference type="EMBL" id="CP000444">
    <property type="protein sequence ID" value="ABI41226.1"/>
    <property type="molecule type" value="Genomic_DNA"/>
</dbReference>
<dbReference type="SMR" id="Q0I079"/>
<dbReference type="KEGG" id="shm:Shewmr7_0220"/>
<dbReference type="HOGENOM" id="CLU_074407_2_0_6"/>
<dbReference type="GO" id="GO:0022625">
    <property type="term" value="C:cytosolic large ribosomal subunit"/>
    <property type="evidence" value="ECO:0007669"/>
    <property type="project" value="TreeGrafter"/>
</dbReference>
<dbReference type="GO" id="GO:0003735">
    <property type="term" value="F:structural constituent of ribosome"/>
    <property type="evidence" value="ECO:0007669"/>
    <property type="project" value="InterPro"/>
</dbReference>
<dbReference type="GO" id="GO:0006412">
    <property type="term" value="P:translation"/>
    <property type="evidence" value="ECO:0007669"/>
    <property type="project" value="UniProtKB-UniRule"/>
</dbReference>
<dbReference type="FunFam" id="3.90.1030.10:FF:000001">
    <property type="entry name" value="50S ribosomal protein L17"/>
    <property type="match status" value="1"/>
</dbReference>
<dbReference type="Gene3D" id="3.90.1030.10">
    <property type="entry name" value="Ribosomal protein L17"/>
    <property type="match status" value="1"/>
</dbReference>
<dbReference type="HAMAP" id="MF_01368">
    <property type="entry name" value="Ribosomal_bL17"/>
    <property type="match status" value="1"/>
</dbReference>
<dbReference type="InterPro" id="IPR000456">
    <property type="entry name" value="Ribosomal_bL17"/>
</dbReference>
<dbReference type="InterPro" id="IPR047859">
    <property type="entry name" value="Ribosomal_bL17_CS"/>
</dbReference>
<dbReference type="InterPro" id="IPR036373">
    <property type="entry name" value="Ribosomal_bL17_sf"/>
</dbReference>
<dbReference type="NCBIfam" id="TIGR00059">
    <property type="entry name" value="L17"/>
    <property type="match status" value="1"/>
</dbReference>
<dbReference type="PANTHER" id="PTHR14413:SF16">
    <property type="entry name" value="LARGE RIBOSOMAL SUBUNIT PROTEIN BL17M"/>
    <property type="match status" value="1"/>
</dbReference>
<dbReference type="PANTHER" id="PTHR14413">
    <property type="entry name" value="RIBOSOMAL PROTEIN L17"/>
    <property type="match status" value="1"/>
</dbReference>
<dbReference type="Pfam" id="PF01196">
    <property type="entry name" value="Ribosomal_L17"/>
    <property type="match status" value="1"/>
</dbReference>
<dbReference type="SUPFAM" id="SSF64263">
    <property type="entry name" value="Prokaryotic ribosomal protein L17"/>
    <property type="match status" value="1"/>
</dbReference>
<dbReference type="PROSITE" id="PS01167">
    <property type="entry name" value="RIBOSOMAL_L17"/>
    <property type="match status" value="1"/>
</dbReference>
<organism>
    <name type="scientific">Shewanella sp. (strain MR-7)</name>
    <dbReference type="NCBI Taxonomy" id="60481"/>
    <lineage>
        <taxon>Bacteria</taxon>
        <taxon>Pseudomonadati</taxon>
        <taxon>Pseudomonadota</taxon>
        <taxon>Gammaproteobacteria</taxon>
        <taxon>Alteromonadales</taxon>
        <taxon>Shewanellaceae</taxon>
        <taxon>Shewanella</taxon>
    </lineage>
</organism>